<gene>
    <name evidence="1" type="primary">aroA</name>
    <name type="ordered locus">PTH_1620</name>
</gene>
<comment type="function">
    <text evidence="1">Catalyzes the transfer of the enolpyruvyl moiety of phosphoenolpyruvate (PEP) to the 5-hydroxyl of shikimate-3-phosphate (S3P) to produce enolpyruvyl shikimate-3-phosphate and inorganic phosphate.</text>
</comment>
<comment type="catalytic activity">
    <reaction evidence="1">
        <text>3-phosphoshikimate + phosphoenolpyruvate = 5-O-(1-carboxyvinyl)-3-phosphoshikimate + phosphate</text>
        <dbReference type="Rhea" id="RHEA:21256"/>
        <dbReference type="ChEBI" id="CHEBI:43474"/>
        <dbReference type="ChEBI" id="CHEBI:57701"/>
        <dbReference type="ChEBI" id="CHEBI:58702"/>
        <dbReference type="ChEBI" id="CHEBI:145989"/>
        <dbReference type="EC" id="2.5.1.19"/>
    </reaction>
    <physiologicalReaction direction="left-to-right" evidence="1">
        <dbReference type="Rhea" id="RHEA:21257"/>
    </physiologicalReaction>
</comment>
<comment type="pathway">
    <text evidence="1">Metabolic intermediate biosynthesis; chorismate biosynthesis; chorismate from D-erythrose 4-phosphate and phosphoenolpyruvate: step 6/7.</text>
</comment>
<comment type="subunit">
    <text evidence="1">Monomer.</text>
</comment>
<comment type="subcellular location">
    <subcellularLocation>
        <location evidence="1">Cytoplasm</location>
    </subcellularLocation>
</comment>
<comment type="similarity">
    <text evidence="1">Belongs to the EPSP synthase family.</text>
</comment>
<accession>A5D1R9</accession>
<reference key="1">
    <citation type="journal article" date="2008" name="Genome Res.">
        <title>The genome of Pelotomaculum thermopropionicum reveals niche-associated evolution in anaerobic microbiota.</title>
        <authorList>
            <person name="Kosaka T."/>
            <person name="Kato S."/>
            <person name="Shimoyama T."/>
            <person name="Ishii S."/>
            <person name="Abe T."/>
            <person name="Watanabe K."/>
        </authorList>
    </citation>
    <scope>NUCLEOTIDE SEQUENCE [LARGE SCALE GENOMIC DNA]</scope>
    <source>
        <strain>DSM 13744 / JCM 10971 / SI</strain>
    </source>
</reference>
<name>AROA_PELTS</name>
<organism>
    <name type="scientific">Pelotomaculum thermopropionicum (strain DSM 13744 / JCM 10971 / SI)</name>
    <dbReference type="NCBI Taxonomy" id="370438"/>
    <lineage>
        <taxon>Bacteria</taxon>
        <taxon>Bacillati</taxon>
        <taxon>Bacillota</taxon>
        <taxon>Clostridia</taxon>
        <taxon>Eubacteriales</taxon>
        <taxon>Desulfotomaculaceae</taxon>
        <taxon>Pelotomaculum</taxon>
    </lineage>
</organism>
<feature type="chain" id="PRO_1000077992" description="3-phosphoshikimate 1-carboxyvinyltransferase">
    <location>
        <begin position="1"/>
        <end position="431"/>
    </location>
</feature>
<feature type="active site" description="Proton acceptor" evidence="1">
    <location>
        <position position="315"/>
    </location>
</feature>
<feature type="binding site" evidence="1">
    <location>
        <position position="21"/>
    </location>
    <ligand>
        <name>3-phosphoshikimate</name>
        <dbReference type="ChEBI" id="CHEBI:145989"/>
    </ligand>
</feature>
<feature type="binding site" evidence="1">
    <location>
        <position position="21"/>
    </location>
    <ligand>
        <name>phosphoenolpyruvate</name>
        <dbReference type="ChEBI" id="CHEBI:58702"/>
    </ligand>
</feature>
<feature type="binding site" evidence="1">
    <location>
        <position position="22"/>
    </location>
    <ligand>
        <name>3-phosphoshikimate</name>
        <dbReference type="ChEBI" id="CHEBI:145989"/>
    </ligand>
</feature>
<feature type="binding site" evidence="1">
    <location>
        <position position="26"/>
    </location>
    <ligand>
        <name>3-phosphoshikimate</name>
        <dbReference type="ChEBI" id="CHEBI:145989"/>
    </ligand>
</feature>
<feature type="binding site" evidence="1">
    <location>
        <position position="94"/>
    </location>
    <ligand>
        <name>phosphoenolpyruvate</name>
        <dbReference type="ChEBI" id="CHEBI:58702"/>
    </ligand>
</feature>
<feature type="binding site" evidence="1">
    <location>
        <position position="122"/>
    </location>
    <ligand>
        <name>phosphoenolpyruvate</name>
        <dbReference type="ChEBI" id="CHEBI:58702"/>
    </ligand>
</feature>
<feature type="binding site" evidence="1">
    <location>
        <position position="167"/>
    </location>
    <ligand>
        <name>3-phosphoshikimate</name>
        <dbReference type="ChEBI" id="CHEBI:145989"/>
    </ligand>
</feature>
<feature type="binding site" evidence="1">
    <location>
        <position position="169"/>
    </location>
    <ligand>
        <name>3-phosphoshikimate</name>
        <dbReference type="ChEBI" id="CHEBI:145989"/>
    </ligand>
</feature>
<feature type="binding site" evidence="1">
    <location>
        <position position="169"/>
    </location>
    <ligand>
        <name>phosphoenolpyruvate</name>
        <dbReference type="ChEBI" id="CHEBI:58702"/>
    </ligand>
</feature>
<feature type="binding site" evidence="1">
    <location>
        <position position="315"/>
    </location>
    <ligand>
        <name>3-phosphoshikimate</name>
        <dbReference type="ChEBI" id="CHEBI:145989"/>
    </ligand>
</feature>
<feature type="binding site" evidence="1">
    <location>
        <position position="342"/>
    </location>
    <ligand>
        <name>3-phosphoshikimate</name>
        <dbReference type="ChEBI" id="CHEBI:145989"/>
    </ligand>
</feature>
<feature type="binding site" evidence="1">
    <location>
        <position position="346"/>
    </location>
    <ligand>
        <name>phosphoenolpyruvate</name>
        <dbReference type="ChEBI" id="CHEBI:58702"/>
    </ligand>
</feature>
<feature type="binding site" evidence="1">
    <location>
        <position position="388"/>
    </location>
    <ligand>
        <name>phosphoenolpyruvate</name>
        <dbReference type="ChEBI" id="CHEBI:58702"/>
    </ligand>
</feature>
<sequence>MDLHVGKSRGLRGTVAVPGDKSISHRAVMLGALASGETIIENFLPGEDCLSTIDCFRKLGVEINGPDNNTVRVRGRGLDGLSEPVDVLDTGNSGTTMRLILGVLAGQPFFSVITGDSSLRRRPMGRVTGPLISMGAKIDGRQNGNLAPLAVRGGTLRPINFVSPVASAQVKSAVLLAGLFTDGVTAVTEAYRTRDHTERMLRAFGAGVEVSEGTVAVKGRPRLTGRKVKVPGDISSAAFLLVAASLIPGSDLTLTGVGVNPTRIGIIEVLSSMGAEIRLFNLREEEEPVADIRVRYNGRLCGTAVGGEIIPRLIDEVPALAVAAALAEGKTVIRDAAELKVKESDRIAAVAGMLAKFGADVEELPDGLLVRGSRALKGCVCESHGDHRIAMAAAVAGLLAEGKTIVRGAECISVSFPGFSDLLAKVMVDWQ</sequence>
<evidence type="ECO:0000255" key="1">
    <source>
        <dbReference type="HAMAP-Rule" id="MF_00210"/>
    </source>
</evidence>
<keyword id="KW-0028">Amino-acid biosynthesis</keyword>
<keyword id="KW-0057">Aromatic amino acid biosynthesis</keyword>
<keyword id="KW-0963">Cytoplasm</keyword>
<keyword id="KW-1185">Reference proteome</keyword>
<keyword id="KW-0808">Transferase</keyword>
<protein>
    <recommendedName>
        <fullName evidence="1">3-phosphoshikimate 1-carboxyvinyltransferase</fullName>
        <ecNumber evidence="1">2.5.1.19</ecNumber>
    </recommendedName>
    <alternativeName>
        <fullName evidence="1">5-enolpyruvylshikimate-3-phosphate synthase</fullName>
        <shortName evidence="1">EPSP synthase</shortName>
        <shortName evidence="1">EPSPS</shortName>
    </alternativeName>
</protein>
<dbReference type="EC" id="2.5.1.19" evidence="1"/>
<dbReference type="EMBL" id="AP009389">
    <property type="protein sequence ID" value="BAF59801.1"/>
    <property type="molecule type" value="Genomic_DNA"/>
</dbReference>
<dbReference type="SMR" id="A5D1R9"/>
<dbReference type="STRING" id="370438.PTH_1620"/>
<dbReference type="KEGG" id="pth:PTH_1620"/>
<dbReference type="eggNOG" id="COG0128">
    <property type="taxonomic scope" value="Bacteria"/>
</dbReference>
<dbReference type="HOGENOM" id="CLU_024321_0_1_9"/>
<dbReference type="UniPathway" id="UPA00053">
    <property type="reaction ID" value="UER00089"/>
</dbReference>
<dbReference type="Proteomes" id="UP000006556">
    <property type="component" value="Chromosome"/>
</dbReference>
<dbReference type="GO" id="GO:0005737">
    <property type="term" value="C:cytoplasm"/>
    <property type="evidence" value="ECO:0007669"/>
    <property type="project" value="UniProtKB-SubCell"/>
</dbReference>
<dbReference type="GO" id="GO:0003866">
    <property type="term" value="F:3-phosphoshikimate 1-carboxyvinyltransferase activity"/>
    <property type="evidence" value="ECO:0007669"/>
    <property type="project" value="UniProtKB-UniRule"/>
</dbReference>
<dbReference type="GO" id="GO:0008652">
    <property type="term" value="P:amino acid biosynthetic process"/>
    <property type="evidence" value="ECO:0007669"/>
    <property type="project" value="UniProtKB-KW"/>
</dbReference>
<dbReference type="GO" id="GO:0009073">
    <property type="term" value="P:aromatic amino acid family biosynthetic process"/>
    <property type="evidence" value="ECO:0007669"/>
    <property type="project" value="UniProtKB-KW"/>
</dbReference>
<dbReference type="GO" id="GO:0009423">
    <property type="term" value="P:chorismate biosynthetic process"/>
    <property type="evidence" value="ECO:0007669"/>
    <property type="project" value="UniProtKB-UniRule"/>
</dbReference>
<dbReference type="CDD" id="cd01556">
    <property type="entry name" value="EPSP_synthase"/>
    <property type="match status" value="1"/>
</dbReference>
<dbReference type="FunFam" id="3.65.10.10:FF:000005">
    <property type="entry name" value="3-phosphoshikimate 1-carboxyvinyltransferase"/>
    <property type="match status" value="1"/>
</dbReference>
<dbReference type="FunFam" id="3.65.10.10:FF:000006">
    <property type="entry name" value="3-phosphoshikimate 1-carboxyvinyltransferase"/>
    <property type="match status" value="1"/>
</dbReference>
<dbReference type="Gene3D" id="3.65.10.10">
    <property type="entry name" value="Enolpyruvate transferase domain"/>
    <property type="match status" value="2"/>
</dbReference>
<dbReference type="HAMAP" id="MF_00210">
    <property type="entry name" value="EPSP_synth"/>
    <property type="match status" value="1"/>
</dbReference>
<dbReference type="InterPro" id="IPR001986">
    <property type="entry name" value="Enolpyruvate_Tfrase_dom"/>
</dbReference>
<dbReference type="InterPro" id="IPR036968">
    <property type="entry name" value="Enolpyruvate_Tfrase_sf"/>
</dbReference>
<dbReference type="InterPro" id="IPR006264">
    <property type="entry name" value="EPSP_synthase"/>
</dbReference>
<dbReference type="InterPro" id="IPR023193">
    <property type="entry name" value="EPSP_synthase_CS"/>
</dbReference>
<dbReference type="InterPro" id="IPR013792">
    <property type="entry name" value="RNA3'P_cycl/enolpyr_Trfase_a/b"/>
</dbReference>
<dbReference type="NCBIfam" id="TIGR01356">
    <property type="entry name" value="aroA"/>
    <property type="match status" value="1"/>
</dbReference>
<dbReference type="PANTHER" id="PTHR21090">
    <property type="entry name" value="AROM/DEHYDROQUINATE SYNTHASE"/>
    <property type="match status" value="1"/>
</dbReference>
<dbReference type="PANTHER" id="PTHR21090:SF5">
    <property type="entry name" value="PENTAFUNCTIONAL AROM POLYPEPTIDE"/>
    <property type="match status" value="1"/>
</dbReference>
<dbReference type="Pfam" id="PF00275">
    <property type="entry name" value="EPSP_synthase"/>
    <property type="match status" value="1"/>
</dbReference>
<dbReference type="PIRSF" id="PIRSF000505">
    <property type="entry name" value="EPSPS"/>
    <property type="match status" value="1"/>
</dbReference>
<dbReference type="SUPFAM" id="SSF55205">
    <property type="entry name" value="EPT/RTPC-like"/>
    <property type="match status" value="1"/>
</dbReference>
<dbReference type="PROSITE" id="PS00104">
    <property type="entry name" value="EPSP_SYNTHASE_1"/>
    <property type="match status" value="1"/>
</dbReference>
<dbReference type="PROSITE" id="PS00885">
    <property type="entry name" value="EPSP_SYNTHASE_2"/>
    <property type="match status" value="1"/>
</dbReference>
<proteinExistence type="inferred from homology"/>